<protein>
    <recommendedName>
        <fullName evidence="1">Ribosomal RNA large subunit methyltransferase H</fullName>
        <ecNumber evidence="1">2.1.1.177</ecNumber>
    </recommendedName>
    <alternativeName>
        <fullName evidence="1">23S rRNA (pseudouridine1915-N3)-methyltransferase</fullName>
    </alternativeName>
    <alternativeName>
        <fullName evidence="1">23S rRNA m3Psi1915 methyltransferase</fullName>
    </alternativeName>
    <alternativeName>
        <fullName evidence="1">rRNA (pseudouridine-N3-)-methyltransferase RlmH</fullName>
    </alternativeName>
</protein>
<accession>B0UVQ3</accession>
<feature type="chain" id="PRO_0000366603" description="Ribosomal RNA large subunit methyltransferase H">
    <location>
        <begin position="1"/>
        <end position="155"/>
    </location>
</feature>
<feature type="binding site" evidence="1">
    <location>
        <position position="72"/>
    </location>
    <ligand>
        <name>S-adenosyl-L-methionine</name>
        <dbReference type="ChEBI" id="CHEBI:59789"/>
    </ligand>
</feature>
<feature type="binding site" evidence="1">
    <location>
        <position position="103"/>
    </location>
    <ligand>
        <name>S-adenosyl-L-methionine</name>
        <dbReference type="ChEBI" id="CHEBI:59789"/>
    </ligand>
</feature>
<feature type="binding site" evidence="1">
    <location>
        <begin position="122"/>
        <end position="127"/>
    </location>
    <ligand>
        <name>S-adenosyl-L-methionine</name>
        <dbReference type="ChEBI" id="CHEBI:59789"/>
    </ligand>
</feature>
<dbReference type="EC" id="2.1.1.177" evidence="1"/>
<dbReference type="EMBL" id="CP000947">
    <property type="protein sequence ID" value="ACA31732.1"/>
    <property type="molecule type" value="Genomic_DNA"/>
</dbReference>
<dbReference type="RefSeq" id="WP_012341017.1">
    <property type="nucleotide sequence ID" value="NC_010519.1"/>
</dbReference>
<dbReference type="SMR" id="B0UVQ3"/>
<dbReference type="STRING" id="228400.HSM_0194"/>
<dbReference type="GeneID" id="31486471"/>
<dbReference type="KEGG" id="hsm:HSM_0194"/>
<dbReference type="HOGENOM" id="CLU_100552_1_0_6"/>
<dbReference type="GO" id="GO:0005737">
    <property type="term" value="C:cytoplasm"/>
    <property type="evidence" value="ECO:0007669"/>
    <property type="project" value="UniProtKB-SubCell"/>
</dbReference>
<dbReference type="GO" id="GO:0070038">
    <property type="term" value="F:rRNA (pseudouridine-N3-)-methyltransferase activity"/>
    <property type="evidence" value="ECO:0007669"/>
    <property type="project" value="UniProtKB-UniRule"/>
</dbReference>
<dbReference type="CDD" id="cd18081">
    <property type="entry name" value="RlmH-like"/>
    <property type="match status" value="1"/>
</dbReference>
<dbReference type="Gene3D" id="3.40.1280.10">
    <property type="match status" value="1"/>
</dbReference>
<dbReference type="HAMAP" id="MF_00658">
    <property type="entry name" value="23SrRNA_methyltr_H"/>
    <property type="match status" value="1"/>
</dbReference>
<dbReference type="InterPro" id="IPR029028">
    <property type="entry name" value="Alpha/beta_knot_MTases"/>
</dbReference>
<dbReference type="InterPro" id="IPR003742">
    <property type="entry name" value="RlmH-like"/>
</dbReference>
<dbReference type="InterPro" id="IPR029026">
    <property type="entry name" value="tRNA_m1G_MTases_N"/>
</dbReference>
<dbReference type="NCBIfam" id="NF000984">
    <property type="entry name" value="PRK00103.1-1"/>
    <property type="match status" value="1"/>
</dbReference>
<dbReference type="NCBIfam" id="NF000986">
    <property type="entry name" value="PRK00103.1-4"/>
    <property type="match status" value="1"/>
</dbReference>
<dbReference type="NCBIfam" id="TIGR00246">
    <property type="entry name" value="tRNA_RlmH_YbeA"/>
    <property type="match status" value="1"/>
</dbReference>
<dbReference type="PANTHER" id="PTHR33603">
    <property type="entry name" value="METHYLTRANSFERASE"/>
    <property type="match status" value="1"/>
</dbReference>
<dbReference type="PANTHER" id="PTHR33603:SF1">
    <property type="entry name" value="RIBOSOMAL RNA LARGE SUBUNIT METHYLTRANSFERASE H"/>
    <property type="match status" value="1"/>
</dbReference>
<dbReference type="Pfam" id="PF02590">
    <property type="entry name" value="SPOUT_MTase"/>
    <property type="match status" value="1"/>
</dbReference>
<dbReference type="PIRSF" id="PIRSF004505">
    <property type="entry name" value="MT_bac"/>
    <property type="match status" value="1"/>
</dbReference>
<dbReference type="SUPFAM" id="SSF75217">
    <property type="entry name" value="alpha/beta knot"/>
    <property type="match status" value="1"/>
</dbReference>
<name>RLMH_HISS2</name>
<reference key="1">
    <citation type="submission" date="2008-02" db="EMBL/GenBank/DDBJ databases">
        <title>Complete sequence of Haemophilus somnus 2336.</title>
        <authorList>
            <consortium name="US DOE Joint Genome Institute"/>
            <person name="Siddaramappa S."/>
            <person name="Duncan A.J."/>
            <person name="Challacombe J.F."/>
            <person name="Rainey D."/>
            <person name="Gillaspy A.F."/>
            <person name="Carson M."/>
            <person name="Gipson J."/>
            <person name="Gipson M."/>
            <person name="Bruce D."/>
            <person name="Detter J.C."/>
            <person name="Han C.S."/>
            <person name="Land M."/>
            <person name="Tapia R."/>
            <person name="Thompson L.S."/>
            <person name="Orvis J."/>
            <person name="Zaitshik J."/>
            <person name="Barnes G."/>
            <person name="Brettin T.S."/>
            <person name="Dyer D.W."/>
            <person name="Inzana T.J."/>
        </authorList>
    </citation>
    <scope>NUCLEOTIDE SEQUENCE [LARGE SCALE GENOMIC DNA]</scope>
    <source>
        <strain>2336</strain>
    </source>
</reference>
<gene>
    <name evidence="1" type="primary">rlmH</name>
    <name type="ordered locus">HSM_0194</name>
</gene>
<comment type="function">
    <text evidence="1">Specifically methylates the pseudouridine at position 1915 (m3Psi1915) in 23S rRNA.</text>
</comment>
<comment type="catalytic activity">
    <reaction evidence="1">
        <text>pseudouridine(1915) in 23S rRNA + S-adenosyl-L-methionine = N(3)-methylpseudouridine(1915) in 23S rRNA + S-adenosyl-L-homocysteine + H(+)</text>
        <dbReference type="Rhea" id="RHEA:42752"/>
        <dbReference type="Rhea" id="RHEA-COMP:10221"/>
        <dbReference type="Rhea" id="RHEA-COMP:10222"/>
        <dbReference type="ChEBI" id="CHEBI:15378"/>
        <dbReference type="ChEBI" id="CHEBI:57856"/>
        <dbReference type="ChEBI" id="CHEBI:59789"/>
        <dbReference type="ChEBI" id="CHEBI:65314"/>
        <dbReference type="ChEBI" id="CHEBI:74486"/>
        <dbReference type="EC" id="2.1.1.177"/>
    </reaction>
</comment>
<comment type="subunit">
    <text evidence="1">Homodimer.</text>
</comment>
<comment type="subcellular location">
    <subcellularLocation>
        <location evidence="1">Cytoplasm</location>
    </subcellularLocation>
</comment>
<comment type="similarity">
    <text evidence="1">Belongs to the RNA methyltransferase RlmH family.</text>
</comment>
<organism>
    <name type="scientific">Histophilus somni (strain 2336)</name>
    <name type="common">Haemophilus somnus</name>
    <dbReference type="NCBI Taxonomy" id="228400"/>
    <lineage>
        <taxon>Bacteria</taxon>
        <taxon>Pseudomonadati</taxon>
        <taxon>Pseudomonadota</taxon>
        <taxon>Gammaproteobacteria</taxon>
        <taxon>Pasteurellales</taxon>
        <taxon>Pasteurellaceae</taxon>
        <taxon>Histophilus</taxon>
    </lineage>
</organism>
<sequence length="155" mass="17556">MKIQLIAVGTKMPDWVTKGFEEYQRRFPKDMPFELIEIPAGKRGKNADIKRILEQEGKAMLSACQKSRIITLDIPGKPWTTEQLAQQLEAWKHDGRNVALLIGGPEGLSPECKAATEQSWSLSPLTLPHPLVRIVVAESLYRAWSLSTNHPYHRE</sequence>
<proteinExistence type="inferred from homology"/>
<evidence type="ECO:0000255" key="1">
    <source>
        <dbReference type="HAMAP-Rule" id="MF_00658"/>
    </source>
</evidence>
<keyword id="KW-0963">Cytoplasm</keyword>
<keyword id="KW-0489">Methyltransferase</keyword>
<keyword id="KW-0698">rRNA processing</keyword>
<keyword id="KW-0949">S-adenosyl-L-methionine</keyword>
<keyword id="KW-0808">Transferase</keyword>